<name>NOD2_PANTR</name>
<reference key="1">
    <citation type="submission" date="2004-04" db="EMBL/GenBank/DDBJ databases">
        <title>Mutation, selection and evolution of the Crohn's disease susceptibility gene, CARD15.</title>
        <authorList>
            <person name="King K."/>
            <person name="Sheikh M."/>
            <person name="Cuthbert A.P."/>
            <person name="Fisher S.A."/>
            <person name="Mirza M.M."/>
            <person name="Sanderson J."/>
            <person name="Forbes A."/>
            <person name="Mansfield J."/>
            <person name="Roberts R.G."/>
            <person name="Mathew C.G."/>
        </authorList>
    </citation>
    <scope>NUCLEOTIDE SEQUENCE [GENOMIC DNA]</scope>
</reference>
<feature type="chain" id="PRO_0000144092" description="Nucleotide-binding oligomerization domain-containing protein 2">
    <location>
        <begin position="1"/>
        <end position="1040"/>
    </location>
</feature>
<feature type="domain" description="CARD 1" evidence="4">
    <location>
        <begin position="26"/>
        <end position="122"/>
    </location>
</feature>
<feature type="domain" description="CARD 2" evidence="4">
    <location>
        <begin position="126"/>
        <end position="218"/>
    </location>
</feature>
<feature type="domain" description="NACHT" evidence="5">
    <location>
        <begin position="293"/>
        <end position="618"/>
    </location>
</feature>
<feature type="repeat" description="LRR 1">
    <location>
        <begin position="791"/>
        <end position="812"/>
    </location>
</feature>
<feature type="repeat" description="LRR 2">
    <location>
        <begin position="816"/>
        <end position="839"/>
    </location>
</feature>
<feature type="repeat" description="LRR 3">
    <location>
        <begin position="844"/>
        <end position="865"/>
    </location>
</feature>
<feature type="repeat" description="LRR 4">
    <location>
        <begin position="872"/>
        <end position="884"/>
    </location>
</feature>
<feature type="repeat" description="LRR 5">
    <location>
        <begin position="900"/>
        <end position="920"/>
    </location>
</feature>
<feature type="repeat" description="LRR 6">
    <location>
        <begin position="928"/>
        <end position="949"/>
    </location>
</feature>
<feature type="repeat" description="LRR 7">
    <location>
        <begin position="956"/>
        <end position="976"/>
    </location>
</feature>
<feature type="repeat" description="LRR 8">
    <location>
        <begin position="984"/>
        <end position="1005"/>
    </location>
</feature>
<feature type="repeat" description="LRR 9">
    <location>
        <begin position="1012"/>
        <end position="1032"/>
    </location>
</feature>
<feature type="region of interest" description="Required for CARD9 binding" evidence="3">
    <location>
        <begin position="241"/>
        <end position="274"/>
    </location>
</feature>
<feature type="short sequence motif" description="ATG16L1-binding motif" evidence="3">
    <location>
        <begin position="63"/>
        <end position="77"/>
    </location>
</feature>
<feature type="binding site" evidence="1">
    <location>
        <position position="239"/>
    </location>
    <ligand>
        <name>ADP</name>
        <dbReference type="ChEBI" id="CHEBI:456216"/>
    </ligand>
</feature>
<feature type="binding site" evidence="1">
    <location>
        <position position="252"/>
    </location>
    <ligand>
        <name>ADP</name>
        <dbReference type="ChEBI" id="CHEBI:456216"/>
    </ligand>
</feature>
<feature type="binding site" evidence="1">
    <location>
        <position position="253"/>
    </location>
    <ligand>
        <name>ADP</name>
        <dbReference type="ChEBI" id="CHEBI:456216"/>
    </ligand>
</feature>
<feature type="binding site" evidence="5">
    <location>
        <begin position="299"/>
        <end position="306"/>
    </location>
    <ligand>
        <name>ATP</name>
        <dbReference type="ChEBI" id="CHEBI:30616"/>
    </ligand>
</feature>
<feature type="binding site" evidence="1">
    <location>
        <position position="302"/>
    </location>
    <ligand>
        <name>ADP</name>
        <dbReference type="ChEBI" id="CHEBI:456216"/>
    </ligand>
</feature>
<feature type="binding site" evidence="1">
    <location>
        <position position="303"/>
    </location>
    <ligand>
        <name>ADP</name>
        <dbReference type="ChEBI" id="CHEBI:456216"/>
    </ligand>
</feature>
<feature type="binding site" evidence="1">
    <location>
        <position position="304"/>
    </location>
    <ligand>
        <name>ADP</name>
        <dbReference type="ChEBI" id="CHEBI:456216"/>
    </ligand>
</feature>
<feature type="binding site" evidence="1">
    <location>
        <position position="305"/>
    </location>
    <ligand>
        <name>ADP</name>
        <dbReference type="ChEBI" id="CHEBI:456216"/>
    </ligand>
</feature>
<feature type="binding site" evidence="1">
    <location>
        <position position="306"/>
    </location>
    <ligand>
        <name>ADP</name>
        <dbReference type="ChEBI" id="CHEBI:456216"/>
    </ligand>
</feature>
<feature type="binding site" evidence="1">
    <location>
        <position position="307"/>
    </location>
    <ligand>
        <name>ADP</name>
        <dbReference type="ChEBI" id="CHEBI:456216"/>
    </ligand>
</feature>
<feature type="binding site" evidence="1">
    <location>
        <position position="603"/>
    </location>
    <ligand>
        <name>ADP</name>
        <dbReference type="ChEBI" id="CHEBI:456216"/>
    </ligand>
</feature>
<feature type="lipid moiety-binding region" description="S-palmitoyl cysteine" evidence="3">
    <location>
        <position position="395"/>
    </location>
</feature>
<feature type="lipid moiety-binding region" description="S-palmitoyl cysteine" evidence="3">
    <location>
        <position position="1033"/>
    </location>
</feature>
<protein>
    <recommendedName>
        <fullName>Nucleotide-binding oligomerization domain-containing protein 2</fullName>
    </recommendedName>
    <alternativeName>
        <fullName>Caspase recruitment domain-containing protein 15</fullName>
    </alternativeName>
</protein>
<organism>
    <name type="scientific">Pan troglodytes</name>
    <name type="common">Chimpanzee</name>
    <dbReference type="NCBI Taxonomy" id="9598"/>
    <lineage>
        <taxon>Eukaryota</taxon>
        <taxon>Metazoa</taxon>
        <taxon>Chordata</taxon>
        <taxon>Craniata</taxon>
        <taxon>Vertebrata</taxon>
        <taxon>Euteleostomi</taxon>
        <taxon>Mammalia</taxon>
        <taxon>Eutheria</taxon>
        <taxon>Euarchontoglires</taxon>
        <taxon>Primates</taxon>
        <taxon>Haplorrhini</taxon>
        <taxon>Catarrhini</taxon>
        <taxon>Hominidae</taxon>
        <taxon>Pan</taxon>
    </lineage>
</organism>
<keyword id="KW-1064">Adaptive immunity</keyword>
<keyword id="KW-0067">ATP-binding</keyword>
<keyword id="KW-0072">Autophagy</keyword>
<keyword id="KW-1003">Cell membrane</keyword>
<keyword id="KW-0963">Cytoplasm</keyword>
<keyword id="KW-0325">Glycoprotein</keyword>
<keyword id="KW-0391">Immunity</keyword>
<keyword id="KW-0399">Innate immunity</keyword>
<keyword id="KW-0433">Leucine-rich repeat</keyword>
<keyword id="KW-0449">Lipoprotein</keyword>
<keyword id="KW-0472">Membrane</keyword>
<keyword id="KW-0496">Mitochondrion</keyword>
<keyword id="KW-0547">Nucleotide-binding</keyword>
<keyword id="KW-0564">Palmitate</keyword>
<keyword id="KW-1185">Reference proteome</keyword>
<keyword id="KW-0677">Repeat</keyword>
<keyword id="KW-0832">Ubl conjugation</keyword>
<gene>
    <name type="primary">NOD2</name>
    <name type="synonym">CARD15</name>
</gene>
<evidence type="ECO:0000250" key="1">
    <source>
        <dbReference type="UniProtKB" id="G1T469"/>
    </source>
</evidence>
<evidence type="ECO:0000250" key="2">
    <source>
        <dbReference type="UniProtKB" id="Q8K3Z0"/>
    </source>
</evidence>
<evidence type="ECO:0000250" key="3">
    <source>
        <dbReference type="UniProtKB" id="Q9HC29"/>
    </source>
</evidence>
<evidence type="ECO:0000255" key="4">
    <source>
        <dbReference type="PROSITE-ProRule" id="PRU00046"/>
    </source>
</evidence>
<evidence type="ECO:0000255" key="5">
    <source>
        <dbReference type="PROSITE-ProRule" id="PRU00136"/>
    </source>
</evidence>
<evidence type="ECO:0000305" key="6"/>
<accession>Q53B87</accession>
<proteinExistence type="inferred from homology"/>
<sequence length="1040" mass="115298">MGEEGGSVSHDEEERASVLLGHSLGCEMCSQEAFQAQRSQLVELLVSGSLEGFESVLDWLLSWEVLSWEDYEGFHLLGQPLSHLARRLLDTVWNKGTWACQKLIAAAQEAQADSQSPKLHGCWDPHSLHPARDLQSHRPAIVRRLHNHVENMLDLAWERGFVSQYECDEIRLPIFTPSQRARRLLDLATVKANGLAAFLLQHVQELPVPLALPLEAATCKKYMAKLRTTVSAQSRFLSTYDGAETLCLEDIYTENVLEVWADVGMAGPPQKSPATLGLEELFSTPGHLNDDADTVLVVGEAGSGKSTLLQRLHLLWAAGRDFQEFLFVFPFSCRQLQCMAKPLSVRTLLFEHCCWPDVGQEDIFQLLLDHPDRVLLTFDGFDEFKFRFTDRERHCSPTDPTSVQTLLFNLLQGNLLKNARKVVTSRPAAVSAFLRKYIRTEFNLKGFSEQGIELYLRKRHREPGVADRLIRLLQATSALHGLCHLPVFSWMVSKCHQELLLQEGGSPKTTTDMYLLILQHFLLHATPPDSASQGLGPSLLRGRLPTLLHLGRLALWGLGMCCYVFSAQQLQAAQVSPDDISLGFLVRAKGVVPGSTAPLEFLHITFQCFFAAFYLALSADVPPALLRHLFNCGRPGNSPMARLLPTMCIQGSEGKDSSVAALLQKAEPHNLQITAAFLAGLLSREHWGLLAECQTSEKALLRRQACARWCLARSLRKHFHSIPPAAPGEAKSVHAMPGFIWLIRSLYEMQEERLARKAARGLNVGHLKLTFCSVGPAECAALAFVLQHLRRPVALQLDYNSVGDIGVEQLLPCLGVCKALYLRDNNISDRGICKLIECALHCEQLQKLALFNNKLTDGCAHSMAKLLACRQNFLALRLGNNYITAAGAQVLAQGLRGNTSLQFLGFWGNRVGDEGAQALAEALGDHQSLRWLSLVGNNIGSVGAQALALMLAKNVMLEELCLEENHLQDEGVCSLAEGLKKNSSLKILKLSNNCITYLGAEALLQALERNDTILEVWLRGNTFSLEEVDKLGCRDTRLLL</sequence>
<dbReference type="EMBL" id="AY594173">
    <property type="protein sequence ID" value="AAS89991.1"/>
    <property type="molecule type" value="Genomic_DNA"/>
</dbReference>
<dbReference type="EMBL" id="AY594162">
    <property type="protein sequence ID" value="AAS89991.1"/>
    <property type="status" value="JOINED"/>
    <property type="molecule type" value="Genomic_DNA"/>
</dbReference>
<dbReference type="EMBL" id="AY594163">
    <property type="protein sequence ID" value="AAS89991.1"/>
    <property type="status" value="JOINED"/>
    <property type="molecule type" value="Genomic_DNA"/>
</dbReference>
<dbReference type="EMBL" id="AY594164">
    <property type="protein sequence ID" value="AAS89991.1"/>
    <property type="status" value="JOINED"/>
    <property type="molecule type" value="Genomic_DNA"/>
</dbReference>
<dbReference type="EMBL" id="AY594165">
    <property type="protein sequence ID" value="AAS89991.1"/>
    <property type="status" value="JOINED"/>
    <property type="molecule type" value="Genomic_DNA"/>
</dbReference>
<dbReference type="EMBL" id="AY594166">
    <property type="protein sequence ID" value="AAS89991.1"/>
    <property type="status" value="JOINED"/>
    <property type="molecule type" value="Genomic_DNA"/>
</dbReference>
<dbReference type="EMBL" id="AY594167">
    <property type="protein sequence ID" value="AAS89991.1"/>
    <property type="status" value="JOINED"/>
    <property type="molecule type" value="Genomic_DNA"/>
</dbReference>
<dbReference type="EMBL" id="AY594168">
    <property type="protein sequence ID" value="AAS89991.1"/>
    <property type="status" value="JOINED"/>
    <property type="molecule type" value="Genomic_DNA"/>
</dbReference>
<dbReference type="EMBL" id="AY594169">
    <property type="protein sequence ID" value="AAS89991.1"/>
    <property type="status" value="JOINED"/>
    <property type="molecule type" value="Genomic_DNA"/>
</dbReference>
<dbReference type="EMBL" id="AY594170">
    <property type="protein sequence ID" value="AAS89991.1"/>
    <property type="status" value="JOINED"/>
    <property type="molecule type" value="Genomic_DNA"/>
</dbReference>
<dbReference type="EMBL" id="AY594171">
    <property type="protein sequence ID" value="AAS89991.1"/>
    <property type="status" value="JOINED"/>
    <property type="molecule type" value="Genomic_DNA"/>
</dbReference>
<dbReference type="EMBL" id="AY594172">
    <property type="protein sequence ID" value="AAS89991.1"/>
    <property type="status" value="JOINED"/>
    <property type="molecule type" value="Genomic_DNA"/>
</dbReference>
<dbReference type="SMR" id="Q53B87"/>
<dbReference type="FunCoup" id="Q53B87">
    <property type="interactions" value="429"/>
</dbReference>
<dbReference type="STRING" id="9598.ENSPTRP00000013836"/>
<dbReference type="PaxDb" id="9598-ENSPTRP00000013836"/>
<dbReference type="eggNOG" id="KOG4308">
    <property type="taxonomic scope" value="Eukaryota"/>
</dbReference>
<dbReference type="InParanoid" id="Q53B87"/>
<dbReference type="Proteomes" id="UP000002277">
    <property type="component" value="Unplaced"/>
</dbReference>
<dbReference type="GO" id="GO:0016323">
    <property type="term" value="C:basolateral plasma membrane"/>
    <property type="evidence" value="ECO:0007669"/>
    <property type="project" value="UniProtKB-SubCell"/>
</dbReference>
<dbReference type="GO" id="GO:0005737">
    <property type="term" value="C:cytoplasm"/>
    <property type="evidence" value="ECO:0000250"/>
    <property type="project" value="UniProtKB"/>
</dbReference>
<dbReference type="GO" id="GO:0005856">
    <property type="term" value="C:cytoskeleton"/>
    <property type="evidence" value="ECO:0000250"/>
    <property type="project" value="UniProtKB"/>
</dbReference>
<dbReference type="GO" id="GO:0005829">
    <property type="term" value="C:cytosol"/>
    <property type="evidence" value="ECO:0000318"/>
    <property type="project" value="GO_Central"/>
</dbReference>
<dbReference type="GO" id="GO:0019897">
    <property type="term" value="C:extrinsic component of plasma membrane"/>
    <property type="evidence" value="ECO:0000250"/>
    <property type="project" value="UniProtKB"/>
</dbReference>
<dbReference type="GO" id="GO:0005739">
    <property type="term" value="C:mitochondrion"/>
    <property type="evidence" value="ECO:0007669"/>
    <property type="project" value="UniProtKB-SubCell"/>
</dbReference>
<dbReference type="GO" id="GO:0032991">
    <property type="term" value="C:protein-containing complex"/>
    <property type="evidence" value="ECO:0000250"/>
    <property type="project" value="UniProtKB"/>
</dbReference>
<dbReference type="GO" id="GO:0031982">
    <property type="term" value="C:vesicle"/>
    <property type="evidence" value="ECO:0000250"/>
    <property type="project" value="UniProtKB"/>
</dbReference>
<dbReference type="GO" id="GO:0043531">
    <property type="term" value="F:ADP binding"/>
    <property type="evidence" value="ECO:0000250"/>
    <property type="project" value="UniProtKB"/>
</dbReference>
<dbReference type="GO" id="GO:0005524">
    <property type="term" value="F:ATP binding"/>
    <property type="evidence" value="ECO:0007669"/>
    <property type="project" value="UniProtKB-KW"/>
</dbReference>
<dbReference type="GO" id="GO:0032500">
    <property type="term" value="F:muramyl dipeptide binding"/>
    <property type="evidence" value="ECO:0000250"/>
    <property type="project" value="UniProtKB"/>
</dbReference>
<dbReference type="GO" id="GO:0038187">
    <property type="term" value="F:pattern recognition receptor activity"/>
    <property type="evidence" value="ECO:0000250"/>
    <property type="project" value="UniProtKB"/>
</dbReference>
<dbReference type="GO" id="GO:0043130">
    <property type="term" value="F:ubiquitin binding"/>
    <property type="evidence" value="ECO:0000250"/>
    <property type="project" value="UniProtKB"/>
</dbReference>
<dbReference type="GO" id="GO:0002250">
    <property type="term" value="P:adaptive immune response"/>
    <property type="evidence" value="ECO:0007669"/>
    <property type="project" value="UniProtKB-KW"/>
</dbReference>
<dbReference type="GO" id="GO:0006914">
    <property type="term" value="P:autophagy"/>
    <property type="evidence" value="ECO:0007669"/>
    <property type="project" value="UniProtKB-KW"/>
</dbReference>
<dbReference type="GO" id="GO:0071222">
    <property type="term" value="P:cellular response to lipopolysaccharide"/>
    <property type="evidence" value="ECO:0000250"/>
    <property type="project" value="UniProtKB"/>
</dbReference>
<dbReference type="GO" id="GO:0071225">
    <property type="term" value="P:cellular response to muramyl dipeptide"/>
    <property type="evidence" value="ECO:0000250"/>
    <property type="project" value="UniProtKB"/>
</dbReference>
<dbReference type="GO" id="GO:0042742">
    <property type="term" value="P:defense response to bacterium"/>
    <property type="evidence" value="ECO:0000250"/>
    <property type="project" value="UniProtKB"/>
</dbReference>
<dbReference type="GO" id="GO:0048874">
    <property type="term" value="P:host-mediated regulation of intestinal microbiota composition"/>
    <property type="evidence" value="ECO:0000250"/>
    <property type="project" value="UniProtKB"/>
</dbReference>
<dbReference type="GO" id="GO:0045087">
    <property type="term" value="P:innate immune response"/>
    <property type="evidence" value="ECO:0000250"/>
    <property type="project" value="UniProtKB"/>
</dbReference>
<dbReference type="GO" id="GO:0036335">
    <property type="term" value="P:intestinal stem cell homeostasis"/>
    <property type="evidence" value="ECO:0000250"/>
    <property type="project" value="UniProtKB"/>
</dbReference>
<dbReference type="GO" id="GO:0035556">
    <property type="term" value="P:intracellular signal transduction"/>
    <property type="evidence" value="ECO:0000318"/>
    <property type="project" value="GO_Central"/>
</dbReference>
<dbReference type="GO" id="GO:0070431">
    <property type="term" value="P:nucleotide-binding oligomerization domain containing 2 signaling pathway"/>
    <property type="evidence" value="ECO:0000250"/>
    <property type="project" value="UniProtKB"/>
</dbReference>
<dbReference type="GO" id="GO:0043123">
    <property type="term" value="P:positive regulation of canonical NF-kappaB signal transduction"/>
    <property type="evidence" value="ECO:0000250"/>
    <property type="project" value="UniProtKB"/>
</dbReference>
<dbReference type="GO" id="GO:1901526">
    <property type="term" value="P:positive regulation of mitophagy"/>
    <property type="evidence" value="ECO:0000250"/>
    <property type="project" value="UniProtKB"/>
</dbReference>
<dbReference type="GO" id="GO:0051092">
    <property type="term" value="P:positive regulation of NF-kappaB transcription factor activity"/>
    <property type="evidence" value="ECO:0000250"/>
    <property type="project" value="UniProtKB"/>
</dbReference>
<dbReference type="GO" id="GO:0045944">
    <property type="term" value="P:positive regulation of transcription by RNA polymerase II"/>
    <property type="evidence" value="ECO:0000250"/>
    <property type="project" value="UniProtKB"/>
</dbReference>
<dbReference type="GO" id="GO:0042981">
    <property type="term" value="P:regulation of apoptotic process"/>
    <property type="evidence" value="ECO:0007669"/>
    <property type="project" value="InterPro"/>
</dbReference>
<dbReference type="GO" id="GO:0032098">
    <property type="term" value="P:regulation of appetite"/>
    <property type="evidence" value="ECO:0000250"/>
    <property type="project" value="UniProtKB"/>
</dbReference>
<dbReference type="GO" id="GO:0032495">
    <property type="term" value="P:response to muramyl dipeptide"/>
    <property type="evidence" value="ECO:0000250"/>
    <property type="project" value="UniProtKB"/>
</dbReference>
<dbReference type="GO" id="GO:0001659">
    <property type="term" value="P:temperature homeostasis"/>
    <property type="evidence" value="ECO:0000250"/>
    <property type="project" value="UniProtKB"/>
</dbReference>
<dbReference type="CDD" id="cd08788">
    <property type="entry name" value="CARD_NOD2_2_CARD15"/>
    <property type="match status" value="1"/>
</dbReference>
<dbReference type="FunFam" id="3.80.10.10:FF:000239">
    <property type="entry name" value="Nucleotide-binding oligomerization domain-containing 2"/>
    <property type="match status" value="1"/>
</dbReference>
<dbReference type="FunFam" id="1.10.533.10:FF:000032">
    <property type="entry name" value="Nucleotide-binding oligomerization domain-containing protein 2"/>
    <property type="match status" value="1"/>
</dbReference>
<dbReference type="FunFam" id="1.10.533.10:FF:000045">
    <property type="entry name" value="Nucleotide-binding oligomerization domain-containing protein 2"/>
    <property type="match status" value="1"/>
</dbReference>
<dbReference type="FunFam" id="3.40.50.300:FF:000940">
    <property type="entry name" value="Nucleotide-binding oligomerization domain-containing protein 2"/>
    <property type="match status" value="1"/>
</dbReference>
<dbReference type="Gene3D" id="1.10.533.10">
    <property type="entry name" value="Death Domain, Fas"/>
    <property type="match status" value="2"/>
</dbReference>
<dbReference type="Gene3D" id="3.40.50.300">
    <property type="entry name" value="P-loop containing nucleotide triphosphate hydrolases"/>
    <property type="match status" value="1"/>
</dbReference>
<dbReference type="Gene3D" id="3.80.10.10">
    <property type="entry name" value="Ribonuclease Inhibitor"/>
    <property type="match status" value="1"/>
</dbReference>
<dbReference type="InterPro" id="IPR001315">
    <property type="entry name" value="CARD"/>
</dbReference>
<dbReference type="InterPro" id="IPR011029">
    <property type="entry name" value="DEATH-like_dom_sf"/>
</dbReference>
<dbReference type="InterPro" id="IPR001611">
    <property type="entry name" value="Leu-rich_rpt"/>
</dbReference>
<dbReference type="InterPro" id="IPR032675">
    <property type="entry name" value="LRR_dom_sf"/>
</dbReference>
<dbReference type="InterPro" id="IPR007111">
    <property type="entry name" value="NACHT_NTPase"/>
</dbReference>
<dbReference type="InterPro" id="IPR051261">
    <property type="entry name" value="NLR"/>
</dbReference>
<dbReference type="InterPro" id="IPR041267">
    <property type="entry name" value="NLRP_HD2"/>
</dbReference>
<dbReference type="InterPro" id="IPR041075">
    <property type="entry name" value="NOD1/2_WH"/>
</dbReference>
<dbReference type="InterPro" id="IPR027417">
    <property type="entry name" value="P-loop_NTPase"/>
</dbReference>
<dbReference type="PANTHER" id="PTHR24106">
    <property type="entry name" value="NACHT, LRR AND CARD DOMAINS-CONTAINING"/>
    <property type="match status" value="1"/>
</dbReference>
<dbReference type="Pfam" id="PF00619">
    <property type="entry name" value="CARD"/>
    <property type="match status" value="1"/>
</dbReference>
<dbReference type="Pfam" id="PF13516">
    <property type="entry name" value="LRR_6"/>
    <property type="match status" value="3"/>
</dbReference>
<dbReference type="Pfam" id="PF05729">
    <property type="entry name" value="NACHT"/>
    <property type="match status" value="1"/>
</dbReference>
<dbReference type="Pfam" id="PF17776">
    <property type="entry name" value="NLRC4_HD2"/>
    <property type="match status" value="1"/>
</dbReference>
<dbReference type="Pfam" id="PF17779">
    <property type="entry name" value="NOD2_WH"/>
    <property type="match status" value="1"/>
</dbReference>
<dbReference type="SMART" id="SM00368">
    <property type="entry name" value="LRR_RI"/>
    <property type="match status" value="7"/>
</dbReference>
<dbReference type="SUPFAM" id="SSF47986">
    <property type="entry name" value="DEATH domain"/>
    <property type="match status" value="2"/>
</dbReference>
<dbReference type="SUPFAM" id="SSF52540">
    <property type="entry name" value="P-loop containing nucleoside triphosphate hydrolases"/>
    <property type="match status" value="1"/>
</dbReference>
<dbReference type="SUPFAM" id="SSF52047">
    <property type="entry name" value="RNI-like"/>
    <property type="match status" value="1"/>
</dbReference>
<dbReference type="PROSITE" id="PS50209">
    <property type="entry name" value="CARD"/>
    <property type="match status" value="2"/>
</dbReference>
<dbReference type="PROSITE" id="PS51450">
    <property type="entry name" value="LRR"/>
    <property type="match status" value="4"/>
</dbReference>
<dbReference type="PROSITE" id="PS50837">
    <property type="entry name" value="NACHT"/>
    <property type="match status" value="1"/>
</dbReference>
<comment type="function">
    <text evidence="2 3">Pattern recognition receptor (PRR) that detects bacterial peptidoglycan fragments and other danger signals and plays an important role in gastrointestinal immunity. Specifically activated by muramyl dipeptide (MDP), a fragment of bacterial peptidoglycan found in every bacterial peptidoglycan type. NOD2 specifically recognizes and binds 6-O-phospho-MDP, the phosphorylated form of MDP, which is generated by NAGK. 6-O-phospho-MDP-binding triggers oligomerization that facilitates the binding and subsequent activation of the proximal adapter receptor-interacting RIPK2. Following recruitment, RIPK2 undergoes 'Met-1'- (linear) and 'Lys-63'-linked polyubiquitination by E3 ubiquitin-protein ligases XIAP, BIRC2, BIRC3 and the LUBAC complex, becoming a scaffolding protein for downstream effectors, triggering activation of the NF-kappa-B and MAP kinases signaling. This in turn leads to the transcriptional activation of hundreds of genes involved in immune response (By similarity). Its ability to detect bacterial MDP plays a central role in maintaining the equilibrium between intestinal microbiota and host immune responses to control inflammation. An imbalance in this relationship results in dysbiosis, whereby pathogenic bacteria prevail on commensals, causing damage in the intestinal epithelial barrier as well as allowing bacterial invasion and inflammation. Acts as a regulator of appetite by sensing MDP in a subset of brain neurons: microbiota-derived MDP reach the brain, where they bind and activate NOD2 in inhibitory hypothalamic neurons, decreasing neuronal activity, thereby regulating satiety and body temperature. NOD2-dependent MDP-sensing of bacterial cell walls in the intestinal epithelial compartment contributes to sustained postnatal growth upon undernutrition (By similarity). Also plays a role in antiviral response by acting as a sensor of single-stranded RNA (ssRNA) from viruses: upon ssRNA-binding, interacts with MAVS, leading to activation of interferon regulatory factor-3/IRF3 and expression of type I interferon. Also acts as a regulator of autophagy in dendritic cells via its interaction with ATG16L1, possibly by recruiting ATG16L1 at the site of bacterial entry (By similarity). NOD2 activation in the small intestine crypt also contributes to intestinal stem cells survival and function: acts by promoting mitophagy via its association with ATG16L1. In addition to its main role in innate immunity, also regulates the adaptive immune system by acting as regulator of helper T-cell and regulatory T-cells (Tregs) (By similarity). Besides recognizing pathogens, also involved in the endoplasmic reticulum stress response: acts by sensing and binding to the cytosolic metabolite sphingosine-1-phosphate generated in response to endoplasmic reticulum stress, initiating an inflammation process that leads to activation of the NF-kappa-B and MAP kinases signaling. May also be involved in NLRP1 activation following activation by MDP, leading to CASP1 activation and IL1B release in macrophages (By similarity).</text>
</comment>
<comment type="activity regulation">
    <text evidence="1">ADP-binding promotes an inactive closed conformation.</text>
</comment>
<comment type="subunit">
    <text evidence="3">Homooligomer: homooligomerizes following muramyl dipeptide (MDP)-binding, promoting RIPK2 recruitment. Interacts (via CARD domain) with RIPK2 (via CARD domain). Following RIPK2 recruitment, RIPK2 homooligomerizes via its CARD domain and forms long filaments named RIPosomes. Interacts (via CARD domain) with ubiquitin; inhibiting interaction with RIPK2. Component of a signaling complex consisting of ARHGEF2, NOD2 and RIPK2. Interacts with ANKRD17 (via N-terminus). Interacts with HSPA1A; the interaction enhances NOD2 stability. Interacts (via both CARD domains) with HSP90; the interaction enhances NOD2 stability. Interacts (via CARD domain) with SOCS3; the interaction promotes NOD2 degradation. Interacts (via CARD domain) with ERBIN; the interaction inhibits activation of NOD2. Interacts with MAPKBP1; the interaction is enhanced in the presence of muramyl dipeptide (MDP) and inhibits NOD2 homooligomerization and activation. Interacts with INAVA; the interaction takes place upon Pattern recognition receptor (PRR) stimulation. Interacts (via NACHT domain) with CARD9. Interacts (via CARD domain) with CASP1; this interaction leads to IL1B processing. Also interacts with CASP4. Interacts with NLRP1; this interaction is enhanced in the presence of muramyl dipeptide (MDP) and leads to increased IL1B release. Interacts with NLRP12; this interaction promotes degradation of NOD2 through the ubiquitin-proteasome pathway. Interacts with ANKHD1, C10orf67, CHMP5, DOCK7, ENTR1, KRT15, LDOC1, PPP1R12C, PPP2R3B, TRIM41 and VIM. Interacts with MAVS; interaction takes place following single-stranded RNA (ssRNA)-binding. Interacts with ATG16L1. Interacts with IRGM; promoting IRGM 'Lys-63'-linked polyubiquitination, which is required for interactions with the core autophagy factors.</text>
</comment>
<comment type="subcellular location">
    <subcellularLocation>
        <location evidence="3">Cell membrane</location>
        <topology evidence="3">Lipid-anchor</topology>
    </subcellularLocation>
    <subcellularLocation>
        <location evidence="3">Basolateral cell membrane</location>
    </subcellularLocation>
    <subcellularLocation>
        <location evidence="3">Cytoplasm</location>
    </subcellularLocation>
    <subcellularLocation>
        <location evidence="3">Mitochondrion</location>
    </subcellularLocation>
    <text evidence="3">Palmitoylation promotes localization to the cell membrane, where it detects bacterial invasion at the point of entry.</text>
</comment>
<comment type="domain">
    <text evidence="3">The ATG16L1-binding motif mediates interaction with ATG16L1.</text>
</comment>
<comment type="domain">
    <text evidence="3">Intramolecular interactions between the N-terminal moiety and the leucine-rich repeats (LRR) may be important for autoinhibition in the absence of activating signal.</text>
</comment>
<comment type="domain">
    <text evidence="3">The LRR repeats recognize and bind muramyl dipeptide (MDP).</text>
</comment>
<comment type="domain">
    <text evidence="3">The NACHT domain recognizes and binds sphingosine-1-phosphate in response to endoplasmic reticulum stress.</text>
</comment>
<comment type="PTM">
    <text evidence="3">Palmitoylated by ZDHHC5; palmitoylation is required for proper recruitment to the bacterial entry site and hence for proper signaling upon cognate peptidoglycan detection. Palmitoylation promotes localization to the cell membrane. Palmitoylation protects from SQSTM1/p62-dependent autophagic degradation.</text>
</comment>
<comment type="PTM">
    <text evidence="3">Polyubiquitinated by TRIM27, leading to proteasome-mediated degradation. Polyubiquitinated and degraded following muramyl dipeptide (MDP) stimulation, conferring MDP tolerance and preventing septic shock.</text>
</comment>
<comment type="PTM">
    <text evidence="3">Degraded via selective autophagy following interaction with IRGM. IRGM promotes NOD2-RIPK2 RIPosome recruitment to autophagosome membranes, promoting their SQSTM1/p62-dependent autophagic degradation.</text>
</comment>
<comment type="PTM">
    <text evidence="3">O-glycosylated by OGT, O-GlcNAcylation increases protein stability.</text>
</comment>
<comment type="similarity">
    <text evidence="6">Belongs to the NOD1-NOD2 family.</text>
</comment>